<feature type="transit peptide" description="Mitochondrion" evidence="8">
    <location>
        <begin position="1"/>
        <end position="102"/>
    </location>
</feature>
<feature type="chain" id="PRO_0000260026" description="Dihydrolipoyllysine-residue acetyltransferase component 2 of pyruvate dehydrogenase complex, mitochondrial">
    <location>
        <begin position="103"/>
        <end position="539"/>
    </location>
</feature>
<feature type="domain" description="Lipoyl-binding" evidence="3">
    <location>
        <begin position="111"/>
        <end position="187"/>
    </location>
</feature>
<feature type="domain" description="Peripheral subunit-binding (PSBD)" evidence="4">
    <location>
        <begin position="248"/>
        <end position="285"/>
    </location>
</feature>
<feature type="region of interest" description="Disordered" evidence="5">
    <location>
        <begin position="102"/>
        <end position="122"/>
    </location>
</feature>
<feature type="region of interest" description="Disordered" evidence="5">
    <location>
        <begin position="196"/>
        <end position="244"/>
    </location>
</feature>
<feature type="active site" evidence="2">
    <location>
        <position position="512"/>
    </location>
</feature>
<feature type="active site" evidence="2">
    <location>
        <position position="516"/>
    </location>
</feature>
<feature type="modified residue" description="N6-lipoyllysine" evidence="1 3">
    <location>
        <position position="152"/>
    </location>
</feature>
<feature type="sequence conflict" description="In Ref. 3; AAM12967." evidence="9" ref="3">
    <original>T</original>
    <variation>A</variation>
    <location>
        <position position="124"/>
    </location>
</feature>
<comment type="function">
    <text evidence="7">The pyruvate dehydrogenase complex catalyzes the overall conversion of pyruvate to acetyl-CoA and CO(2). It contains multiple copies of three enzymatic components: pyruvate dehydrogenase (E1), dihydrolipoamide acetyltransferase (E2) and lipoamide dehydrogenase (E3).</text>
</comment>
<comment type="catalytic activity">
    <reaction>
        <text>N(6)-[(R)-dihydrolipoyl]-L-lysyl-[protein] + acetyl-CoA = N(6)-[(R)-S(8)-acetyldihydrolipoyl]-L-lysyl-[protein] + CoA</text>
        <dbReference type="Rhea" id="RHEA:17017"/>
        <dbReference type="Rhea" id="RHEA-COMP:10475"/>
        <dbReference type="Rhea" id="RHEA-COMP:10478"/>
        <dbReference type="ChEBI" id="CHEBI:57287"/>
        <dbReference type="ChEBI" id="CHEBI:57288"/>
        <dbReference type="ChEBI" id="CHEBI:83100"/>
        <dbReference type="ChEBI" id="CHEBI:83111"/>
        <dbReference type="EC" id="2.3.1.12"/>
    </reaction>
</comment>
<comment type="cofactor">
    <cofactor>
        <name>(R)-lipoate</name>
        <dbReference type="ChEBI" id="CHEBI:83088"/>
    </cofactor>
    <text>Binds 1 lipoyl cofactor covalently.</text>
</comment>
<comment type="subcellular location">
    <subcellularLocation>
        <location evidence="6 10">Mitochondrion matrix</location>
    </subcellularLocation>
</comment>
<comment type="similarity">
    <text evidence="9">Belongs to the 2-oxoacid dehydrogenase family.</text>
</comment>
<comment type="sequence caution" evidence="9">
    <conflict type="erroneous gene model prediction">
        <sequence resource="EMBL-CDS" id="BAB02323"/>
    </conflict>
</comment>
<organism>
    <name type="scientific">Arabidopsis thaliana</name>
    <name type="common">Mouse-ear cress</name>
    <dbReference type="NCBI Taxonomy" id="3702"/>
    <lineage>
        <taxon>Eukaryota</taxon>
        <taxon>Viridiplantae</taxon>
        <taxon>Streptophyta</taxon>
        <taxon>Embryophyta</taxon>
        <taxon>Tracheophyta</taxon>
        <taxon>Spermatophyta</taxon>
        <taxon>Magnoliopsida</taxon>
        <taxon>eudicotyledons</taxon>
        <taxon>Gunneridae</taxon>
        <taxon>Pentapetalae</taxon>
        <taxon>rosids</taxon>
        <taxon>malvids</taxon>
        <taxon>Brassicales</taxon>
        <taxon>Brassicaceae</taxon>
        <taxon>Camelineae</taxon>
        <taxon>Arabidopsis</taxon>
    </lineage>
</organism>
<name>ODP22_ARATH</name>
<gene>
    <name type="ordered locus">At3g13930</name>
    <name type="ORF">MDC16.5</name>
</gene>
<protein>
    <recommendedName>
        <fullName>Dihydrolipoyllysine-residue acetyltransferase component 2 of pyruvate dehydrogenase complex, mitochondrial</fullName>
        <ecNumber>2.3.1.12</ecNumber>
    </recommendedName>
    <alternativeName>
        <fullName>Dihydrolipoamide S-acetyltransferase component 2 of pyruvate dehydrogenase complex</fullName>
    </alternativeName>
    <alternativeName>
        <fullName>Pyruvate dehydrogenase complex component E2 2</fullName>
        <shortName>PDC-E2 2</shortName>
        <shortName>PDCE2 2</shortName>
    </alternativeName>
</protein>
<proteinExistence type="evidence at protein level"/>
<dbReference type="EC" id="2.3.1.12"/>
<dbReference type="EMBL" id="AB019229">
    <property type="protein sequence ID" value="BAB02323.1"/>
    <property type="status" value="ALT_SEQ"/>
    <property type="molecule type" value="Genomic_DNA"/>
</dbReference>
<dbReference type="EMBL" id="CP002686">
    <property type="protein sequence ID" value="AEE75442.1"/>
    <property type="molecule type" value="Genomic_DNA"/>
</dbReference>
<dbReference type="EMBL" id="AF367302">
    <property type="protein sequence ID" value="AAK32889.1"/>
    <property type="molecule type" value="mRNA"/>
</dbReference>
<dbReference type="EMBL" id="AY091691">
    <property type="protein sequence ID" value="AAM10290.1"/>
    <property type="molecule type" value="mRNA"/>
</dbReference>
<dbReference type="EMBL" id="AY092968">
    <property type="protein sequence ID" value="AAM12967.1"/>
    <property type="molecule type" value="mRNA"/>
</dbReference>
<dbReference type="EMBL" id="BT000444">
    <property type="protein sequence ID" value="AAN17421.1"/>
    <property type="molecule type" value="mRNA"/>
</dbReference>
<dbReference type="EMBL" id="BT000702">
    <property type="protein sequence ID" value="AAN31846.1"/>
    <property type="molecule type" value="mRNA"/>
</dbReference>
<dbReference type="EMBL" id="BT001223">
    <property type="protein sequence ID" value="AAN65110.1"/>
    <property type="molecule type" value="mRNA"/>
</dbReference>
<dbReference type="RefSeq" id="NP_566470.1">
    <property type="nucleotide sequence ID" value="NM_112247.3"/>
</dbReference>
<dbReference type="SMR" id="Q8RWN9"/>
<dbReference type="BioGRID" id="5940">
    <property type="interactions" value="13"/>
</dbReference>
<dbReference type="FunCoup" id="Q8RWN9">
    <property type="interactions" value="3433"/>
</dbReference>
<dbReference type="STRING" id="3702.Q8RWN9"/>
<dbReference type="iPTMnet" id="Q8RWN9"/>
<dbReference type="PaxDb" id="3702-AT3G13930.1"/>
<dbReference type="ProteomicsDB" id="250780"/>
<dbReference type="EnsemblPlants" id="AT3G13930.1">
    <property type="protein sequence ID" value="AT3G13930.1"/>
    <property type="gene ID" value="AT3G13930"/>
</dbReference>
<dbReference type="GeneID" id="820606"/>
<dbReference type="Gramene" id="AT3G13930.1">
    <property type="protein sequence ID" value="AT3G13930.1"/>
    <property type="gene ID" value="AT3G13930"/>
</dbReference>
<dbReference type="KEGG" id="ath:AT3G13930"/>
<dbReference type="Araport" id="AT3G13930"/>
<dbReference type="TAIR" id="AT3G13930">
    <property type="gene designation" value="MTE2-2"/>
</dbReference>
<dbReference type="eggNOG" id="KOG0557">
    <property type="taxonomic scope" value="Eukaryota"/>
</dbReference>
<dbReference type="HOGENOM" id="CLU_016733_10_2_1"/>
<dbReference type="InParanoid" id="Q8RWN9"/>
<dbReference type="OMA" id="ATIEWEA"/>
<dbReference type="PhylomeDB" id="Q8RWN9"/>
<dbReference type="BioCyc" id="ARA:AT3G13930-MONOMER"/>
<dbReference type="BRENDA" id="1.2.1.104">
    <property type="organism ID" value="399"/>
</dbReference>
<dbReference type="CD-CODE" id="4299E36E">
    <property type="entry name" value="Nucleolus"/>
</dbReference>
<dbReference type="PRO" id="PR:Q8RWN9"/>
<dbReference type="Proteomes" id="UP000006548">
    <property type="component" value="Chromosome 3"/>
</dbReference>
<dbReference type="ExpressionAtlas" id="Q8RWN9">
    <property type="expression patterns" value="baseline and differential"/>
</dbReference>
<dbReference type="GO" id="GO:0009941">
    <property type="term" value="C:chloroplast envelope"/>
    <property type="evidence" value="ECO:0007005"/>
    <property type="project" value="TAIR"/>
</dbReference>
<dbReference type="GO" id="GO:0005829">
    <property type="term" value="C:cytosol"/>
    <property type="evidence" value="ECO:0007005"/>
    <property type="project" value="TAIR"/>
</dbReference>
<dbReference type="GO" id="GO:0005759">
    <property type="term" value="C:mitochondrial matrix"/>
    <property type="evidence" value="ECO:0007669"/>
    <property type="project" value="UniProtKB-SubCell"/>
</dbReference>
<dbReference type="GO" id="GO:0005739">
    <property type="term" value="C:mitochondrion"/>
    <property type="evidence" value="ECO:0000314"/>
    <property type="project" value="TAIR"/>
</dbReference>
<dbReference type="GO" id="GO:0045254">
    <property type="term" value="C:pyruvate dehydrogenase complex"/>
    <property type="evidence" value="ECO:0007669"/>
    <property type="project" value="InterPro"/>
</dbReference>
<dbReference type="GO" id="GO:0005507">
    <property type="term" value="F:copper ion binding"/>
    <property type="evidence" value="ECO:0007005"/>
    <property type="project" value="TAIR"/>
</dbReference>
<dbReference type="GO" id="GO:0004742">
    <property type="term" value="F:dihydrolipoyllysine-residue acetyltransferase activity"/>
    <property type="evidence" value="ECO:0007669"/>
    <property type="project" value="UniProtKB-EC"/>
</dbReference>
<dbReference type="GO" id="GO:0006086">
    <property type="term" value="P:pyruvate decarboxylation to acetyl-CoA"/>
    <property type="evidence" value="ECO:0007669"/>
    <property type="project" value="InterPro"/>
</dbReference>
<dbReference type="CDD" id="cd06849">
    <property type="entry name" value="lipoyl_domain"/>
    <property type="match status" value="1"/>
</dbReference>
<dbReference type="FunFam" id="2.40.50.100:FF:000010">
    <property type="entry name" value="Acetyltransferase component of pyruvate dehydrogenase complex"/>
    <property type="match status" value="1"/>
</dbReference>
<dbReference type="FunFam" id="3.30.559.10:FF:000003">
    <property type="entry name" value="Acetyltransferase component of pyruvate dehydrogenase complex"/>
    <property type="match status" value="1"/>
</dbReference>
<dbReference type="FunFam" id="4.10.320.10:FF:000006">
    <property type="entry name" value="Acetyltransferase component of pyruvate dehydrogenase complex"/>
    <property type="match status" value="1"/>
</dbReference>
<dbReference type="Gene3D" id="2.40.50.100">
    <property type="match status" value="1"/>
</dbReference>
<dbReference type="Gene3D" id="3.30.559.10">
    <property type="entry name" value="Chloramphenicol acetyltransferase-like domain"/>
    <property type="match status" value="1"/>
</dbReference>
<dbReference type="Gene3D" id="4.10.320.10">
    <property type="entry name" value="E3-binding domain"/>
    <property type="match status" value="1"/>
</dbReference>
<dbReference type="InterPro" id="IPR003016">
    <property type="entry name" value="2-oxoA_DH_lipoyl-BS"/>
</dbReference>
<dbReference type="InterPro" id="IPR001078">
    <property type="entry name" value="2-oxoacid_DH_actylTfrase"/>
</dbReference>
<dbReference type="InterPro" id="IPR000089">
    <property type="entry name" value="Biotin_lipoyl"/>
</dbReference>
<dbReference type="InterPro" id="IPR023213">
    <property type="entry name" value="CAT-like_dom_sf"/>
</dbReference>
<dbReference type="InterPro" id="IPR045257">
    <property type="entry name" value="E2/Pdx1"/>
</dbReference>
<dbReference type="InterPro" id="IPR036625">
    <property type="entry name" value="E3-bd_dom_sf"/>
</dbReference>
<dbReference type="InterPro" id="IPR006257">
    <property type="entry name" value="LAT1"/>
</dbReference>
<dbReference type="InterPro" id="IPR004167">
    <property type="entry name" value="PSBD"/>
</dbReference>
<dbReference type="InterPro" id="IPR011053">
    <property type="entry name" value="Single_hybrid_motif"/>
</dbReference>
<dbReference type="NCBIfam" id="TIGR01349">
    <property type="entry name" value="PDHac_trf_mito"/>
    <property type="match status" value="1"/>
</dbReference>
<dbReference type="PANTHER" id="PTHR23151">
    <property type="entry name" value="DIHYDROLIPOAMIDE ACETYL/SUCCINYL-TRANSFERASE-RELATED"/>
    <property type="match status" value="1"/>
</dbReference>
<dbReference type="PANTHER" id="PTHR23151:SF90">
    <property type="entry name" value="DIHYDROLIPOYLLYSINE-RESIDUE ACETYLTRANSFERASE COMPONENT OF PYRUVATE DEHYDROGENASE COMPLEX, MITOCHONDRIAL-RELATED"/>
    <property type="match status" value="1"/>
</dbReference>
<dbReference type="Pfam" id="PF00198">
    <property type="entry name" value="2-oxoacid_dh"/>
    <property type="match status" value="1"/>
</dbReference>
<dbReference type="Pfam" id="PF00364">
    <property type="entry name" value="Biotin_lipoyl"/>
    <property type="match status" value="1"/>
</dbReference>
<dbReference type="Pfam" id="PF02817">
    <property type="entry name" value="E3_binding"/>
    <property type="match status" value="1"/>
</dbReference>
<dbReference type="SUPFAM" id="SSF52777">
    <property type="entry name" value="CoA-dependent acyltransferases"/>
    <property type="match status" value="1"/>
</dbReference>
<dbReference type="SUPFAM" id="SSF47005">
    <property type="entry name" value="Peripheral subunit-binding domain of 2-oxo acid dehydrogenase complex"/>
    <property type="match status" value="1"/>
</dbReference>
<dbReference type="SUPFAM" id="SSF51230">
    <property type="entry name" value="Single hybrid motif"/>
    <property type="match status" value="1"/>
</dbReference>
<dbReference type="PROSITE" id="PS50968">
    <property type="entry name" value="BIOTINYL_LIPOYL"/>
    <property type="match status" value="1"/>
</dbReference>
<dbReference type="PROSITE" id="PS00189">
    <property type="entry name" value="LIPOYL"/>
    <property type="match status" value="1"/>
</dbReference>
<dbReference type="PROSITE" id="PS51826">
    <property type="entry name" value="PSBD"/>
    <property type="match status" value="1"/>
</dbReference>
<sequence length="539" mass="58468">MASRIINHSKKLKHVSALLRRDHAVAVRCFSNSTHPSLVGREDIFKARLNYSSVERISKCGTGNVTMLSGISTTSTKLSSPMAGPKLFKEFISSQMRSVRGFSSSSDLPPHQEIGMPSLSPTMTEGNIARWLKKEGDKVAPGEVLCEVETDKATVEMECMEEGFLAKIVKEEGAKEIQVGEVIAITVEDEDDIQKFKDYTPSSDTGPAAPEAKPAPSLPKEEKVEKPASAPEAKISKPSSAPSEDRIFASPLARKLAEDNNVPLSSIKGTGPEGRIVKADVEDFLASGSKETTAKPSKQVDSKVPALDYVDIPHTQIRKVTASRLAFSKQTIPHYYLTVDTCVDKMMGLRSQLNSFQEASGGKRISVNDLVIKAAALALRKVPQCNSSWTDEYIRQFKNVNINVAVQTENGLYVPVVKDADKKGLSTIGEEVRFLAQKAKENSLKPEDYEGGTFTVSNLGGPFGIKQFCAVINPPQAAILAIGSAEKRVVPGTGPDQYNVASYMSVTLSCDHRVIDGAIGAEWLKAFKGYIETPESMLL</sequence>
<keyword id="KW-0012">Acyltransferase</keyword>
<keyword id="KW-0450">Lipoyl</keyword>
<keyword id="KW-0496">Mitochondrion</keyword>
<keyword id="KW-1185">Reference proteome</keyword>
<keyword id="KW-0808">Transferase</keyword>
<keyword id="KW-0809">Transit peptide</keyword>
<evidence type="ECO:0000250" key="1"/>
<evidence type="ECO:0000255" key="2"/>
<evidence type="ECO:0000255" key="3">
    <source>
        <dbReference type="PROSITE-ProRule" id="PRU01066"/>
    </source>
</evidence>
<evidence type="ECO:0000255" key="4">
    <source>
        <dbReference type="PROSITE-ProRule" id="PRU01170"/>
    </source>
</evidence>
<evidence type="ECO:0000256" key="5">
    <source>
        <dbReference type="SAM" id="MobiDB-lite"/>
    </source>
</evidence>
<evidence type="ECO:0000269" key="6">
    <source>
    </source>
</evidence>
<evidence type="ECO:0000269" key="7">
    <source>
    </source>
</evidence>
<evidence type="ECO:0000269" key="8">
    <source>
    </source>
</evidence>
<evidence type="ECO:0000305" key="9"/>
<evidence type="ECO:0000305" key="10">
    <source>
    </source>
</evidence>
<accession>Q8RWN9</accession>
<accession>Q9ASS8</accession>
<accession>Q9LVK7</accession>
<reference key="1">
    <citation type="journal article" date="2000" name="DNA Res.">
        <title>Structural analysis of Arabidopsis thaliana chromosome 3. I. Sequence features of the regions of 4,504,864 bp covered by sixty P1 and TAC clones.</title>
        <authorList>
            <person name="Sato S."/>
            <person name="Nakamura Y."/>
            <person name="Kaneko T."/>
            <person name="Katoh T."/>
            <person name="Asamizu E."/>
            <person name="Tabata S."/>
        </authorList>
    </citation>
    <scope>NUCLEOTIDE SEQUENCE [LARGE SCALE GENOMIC DNA]</scope>
    <source>
        <strain>cv. Columbia</strain>
    </source>
</reference>
<reference key="2">
    <citation type="journal article" date="2017" name="Plant J.">
        <title>Araport11: a complete reannotation of the Arabidopsis thaliana reference genome.</title>
        <authorList>
            <person name="Cheng C.Y."/>
            <person name="Krishnakumar V."/>
            <person name="Chan A.P."/>
            <person name="Thibaud-Nissen F."/>
            <person name="Schobel S."/>
            <person name="Town C.D."/>
        </authorList>
    </citation>
    <scope>GENOME REANNOTATION</scope>
    <source>
        <strain>cv. Columbia</strain>
    </source>
</reference>
<reference key="3">
    <citation type="journal article" date="2003" name="Science">
        <title>Empirical analysis of transcriptional activity in the Arabidopsis genome.</title>
        <authorList>
            <person name="Yamada K."/>
            <person name="Lim J."/>
            <person name="Dale J.M."/>
            <person name="Chen H."/>
            <person name="Shinn P."/>
            <person name="Palm C.J."/>
            <person name="Southwick A.M."/>
            <person name="Wu H.C."/>
            <person name="Kim C.J."/>
            <person name="Nguyen M."/>
            <person name="Pham P.K."/>
            <person name="Cheuk R.F."/>
            <person name="Karlin-Newmann G."/>
            <person name="Liu S.X."/>
            <person name="Lam B."/>
            <person name="Sakano H."/>
            <person name="Wu T."/>
            <person name="Yu G."/>
            <person name="Miranda M."/>
            <person name="Quach H.L."/>
            <person name="Tripp M."/>
            <person name="Chang C.H."/>
            <person name="Lee J.M."/>
            <person name="Toriumi M.J."/>
            <person name="Chan M.M."/>
            <person name="Tang C.C."/>
            <person name="Onodera C.S."/>
            <person name="Deng J.M."/>
            <person name="Akiyama K."/>
            <person name="Ansari Y."/>
            <person name="Arakawa T."/>
            <person name="Banh J."/>
            <person name="Banno F."/>
            <person name="Bowser L."/>
            <person name="Brooks S.Y."/>
            <person name="Carninci P."/>
            <person name="Chao Q."/>
            <person name="Choy N."/>
            <person name="Enju A."/>
            <person name="Goldsmith A.D."/>
            <person name="Gurjal M."/>
            <person name="Hansen N.F."/>
            <person name="Hayashizaki Y."/>
            <person name="Johnson-Hopson C."/>
            <person name="Hsuan V.W."/>
            <person name="Iida K."/>
            <person name="Karnes M."/>
            <person name="Khan S."/>
            <person name="Koesema E."/>
            <person name="Ishida J."/>
            <person name="Jiang P.X."/>
            <person name="Jones T."/>
            <person name="Kawai J."/>
            <person name="Kamiya A."/>
            <person name="Meyers C."/>
            <person name="Nakajima M."/>
            <person name="Narusaka M."/>
            <person name="Seki M."/>
            <person name="Sakurai T."/>
            <person name="Satou M."/>
            <person name="Tamse R."/>
            <person name="Vaysberg M."/>
            <person name="Wallender E.K."/>
            <person name="Wong C."/>
            <person name="Yamamura Y."/>
            <person name="Yuan S."/>
            <person name="Shinozaki K."/>
            <person name="Davis R.W."/>
            <person name="Theologis A."/>
            <person name="Ecker J.R."/>
        </authorList>
    </citation>
    <scope>NUCLEOTIDE SEQUENCE [LARGE SCALE MRNA]</scope>
    <source>
        <strain>cv. Columbia</strain>
    </source>
</reference>
<reference key="4">
    <citation type="journal article" date="2004" name="Plant Cell">
        <title>Experimental analysis of the Arabidopsis mitochondrial proteome highlights signaling and regulatory components, provides assessment of targeting prediction programs, and indicates plant-specific mitochondrial proteins.</title>
        <authorList>
            <person name="Heazlewood J.L."/>
            <person name="Tonti-Filippini J.S."/>
            <person name="Gout A.M."/>
            <person name="Day D.A."/>
            <person name="Whelan J."/>
            <person name="Millar A.H."/>
        </authorList>
    </citation>
    <scope>IDENTIFICATION BY MASS SPECTROMETRY</scope>
    <scope>SUBCELLULAR LOCATION [LARGE SCALE ANALYSIS]</scope>
    <source>
        <strain>cv. Landsberg erecta</strain>
    </source>
</reference>
<reference key="5">
    <citation type="journal article" date="2004" name="Plant Physiol.">
        <title>Lipoic acid-dependent oxidative catabolism of alpha-keto acids in mitochondria provides evidence for branched-chain amino acid catabolism in Arabidopsis.</title>
        <authorList>
            <person name="Taylor N.L."/>
            <person name="Heazlewood J.L."/>
            <person name="Day D.A."/>
            <person name="Millar A.H."/>
        </authorList>
    </citation>
    <scope>FUNCTION</scope>
</reference>
<reference key="6">
    <citation type="journal article" date="2015" name="J. Exp. Bot.">
        <title>Identification of cleavage sites and substrate proteins for two mitochondrial intermediate peptidases in Arabidopsis thaliana.</title>
        <authorList>
            <person name="Carrie C."/>
            <person name="Venne A.S."/>
            <person name="Zahedi R.P."/>
            <person name="Soll J."/>
        </authorList>
    </citation>
    <scope>IDENTIFICATION BY MASS SPECTROMETRY</scope>
    <scope>CLEAVAGE OF TRANSIT PEPTIDE AFTER PHE-102</scope>
</reference>